<proteinExistence type="inferred from homology"/>
<reference evidence="4" key="1">
    <citation type="journal article" date="2007" name="J. Cell Sci.">
        <title>Mitch a rapidly evolving component of the Ndc80 kinetochore complex required for correct chromosome segregation in Drosophila.</title>
        <authorList>
            <person name="Williams B."/>
            <person name="Leung G."/>
            <person name="Maiato H."/>
            <person name="Wong A."/>
            <person name="Li Z."/>
            <person name="Williams E.V."/>
            <person name="Kirkpatrick C."/>
            <person name="Aquadro C.F."/>
            <person name="Rieder C.L."/>
            <person name="Goldberg M.L."/>
        </authorList>
    </citation>
    <scope>NUCLEOTIDE SEQUENCE [GENOMIC DNA]</scope>
</reference>
<keyword id="KW-0131">Cell cycle</keyword>
<keyword id="KW-0132">Cell division</keyword>
<keyword id="KW-0137">Centromere</keyword>
<keyword id="KW-0158">Chromosome</keyword>
<keyword id="KW-0175">Coiled coil</keyword>
<keyword id="KW-0995">Kinetochore</keyword>
<keyword id="KW-0469">Meiosis</keyword>
<keyword id="KW-0498">Mitosis</keyword>
<keyword id="KW-0539">Nucleus</keyword>
<accession>Q64EW2</accession>
<organism>
    <name type="scientific">Drosophila orena</name>
    <name type="common">Fruit fly</name>
    <dbReference type="NCBI Taxonomy" id="7233"/>
    <lineage>
        <taxon>Eukaryota</taxon>
        <taxon>Metazoa</taxon>
        <taxon>Ecdysozoa</taxon>
        <taxon>Arthropoda</taxon>
        <taxon>Hexapoda</taxon>
        <taxon>Insecta</taxon>
        <taxon>Pterygota</taxon>
        <taxon>Neoptera</taxon>
        <taxon>Endopterygota</taxon>
        <taxon>Diptera</taxon>
        <taxon>Brachycera</taxon>
        <taxon>Muscomorpha</taxon>
        <taxon>Ephydroidea</taxon>
        <taxon>Drosophilidae</taxon>
        <taxon>Drosophila</taxon>
        <taxon>Sophophora</taxon>
    </lineage>
</organism>
<evidence type="ECO:0000250" key="1">
    <source>
        <dbReference type="UniProtKB" id="Q9HBM1"/>
    </source>
</evidence>
<evidence type="ECO:0000250" key="2">
    <source>
        <dbReference type="UniProtKB" id="Q9V3V7"/>
    </source>
</evidence>
<evidence type="ECO:0000255" key="3"/>
<evidence type="ECO:0000312" key="4">
    <source>
        <dbReference type="EMBL" id="AAU15005.1"/>
    </source>
</evidence>
<name>SPC25_DROOR</name>
<comment type="function">
    <text evidence="1 2">Acts as a component of the essential kinetochore-associated Ndc80 complex, which is required for chromosome segregation and spindle checkpoint activity during meiosis and mitosis. Required for kinetochore integrity and the organization of stable microtubule binding sites in the outer plate of the kinetochore. Participates in SAC signaling that responds specifically to disruptions in spindle microtubule dynamics. The NDC80 complex synergistically enhances the affinity of the SKA1 complex for microtubules and may allow the NDC80 complex to track depolymerizing microtubules.</text>
</comment>
<comment type="subunit">
    <text evidence="2">Component of the Ndc80 complex, which is composed of Ndc80, Nuf2 and Spc25.</text>
</comment>
<comment type="subcellular location">
    <subcellularLocation>
        <location evidence="2">Nucleus</location>
    </subcellularLocation>
    <subcellularLocation>
        <location evidence="2">Chromosome</location>
        <location evidence="2">Centromere</location>
        <location evidence="2">Kinetochore</location>
    </subcellularLocation>
</comment>
<comment type="similarity">
    <text evidence="3">Belongs to the SPC25 family.</text>
</comment>
<dbReference type="EMBL" id="AY714311">
    <property type="protein sequence ID" value="AAU15005.1"/>
    <property type="molecule type" value="Genomic_DNA"/>
</dbReference>
<dbReference type="SMR" id="Q64EW2"/>
<dbReference type="GO" id="GO:0031262">
    <property type="term" value="C:Ndc80 complex"/>
    <property type="evidence" value="ECO:0000250"/>
    <property type="project" value="UniProtKB"/>
</dbReference>
<dbReference type="GO" id="GO:0005634">
    <property type="term" value="C:nucleus"/>
    <property type="evidence" value="ECO:0007669"/>
    <property type="project" value="UniProtKB-SubCell"/>
</dbReference>
<dbReference type="GO" id="GO:0051301">
    <property type="term" value="P:cell division"/>
    <property type="evidence" value="ECO:0007669"/>
    <property type="project" value="UniProtKB-KW"/>
</dbReference>
<dbReference type="GO" id="GO:0051311">
    <property type="term" value="P:meiotic metaphase chromosome alignment"/>
    <property type="evidence" value="ECO:0000250"/>
    <property type="project" value="UniProtKB"/>
</dbReference>
<dbReference type="GO" id="GO:0000212">
    <property type="term" value="P:meiotic spindle organization"/>
    <property type="evidence" value="ECO:0000250"/>
    <property type="project" value="UniProtKB"/>
</dbReference>
<dbReference type="GO" id="GO:0007080">
    <property type="term" value="P:mitotic metaphase chromosome alignment"/>
    <property type="evidence" value="ECO:0000250"/>
    <property type="project" value="UniProtKB"/>
</dbReference>
<feature type="chain" id="PRO_0000392422" description="Kinetochore protein Spc25">
    <location>
        <begin position="1"/>
        <end position="220"/>
    </location>
</feature>
<feature type="coiled-coil region" evidence="3">
    <location>
        <begin position="79"/>
        <end position="114"/>
    </location>
</feature>
<sequence>MAIIMAESSYERRIKALYEKQIRMEALEGKFIKKVFKFNSVLLDIKETSARHQRKVGKMQKVVTERREELGRRVTFMGHLTQEVEAIKLRNLAMKDQIKQQKMLNNQRKNEIMERIHTLSKTTGTYVNQEALPARVKGVTVIPGDRRNQLIPFDLNATDDEGLNSLCQHLESLNVDVSQWQQLVSLAMDVALGARAPTTPPKEAANCKSIIEIDLTSPTS</sequence>
<protein>
    <recommendedName>
        <fullName evidence="2">Kinetochore protein Spc25</fullName>
    </recommendedName>
</protein>
<gene>
    <name evidence="2" type="primary">Spc25</name>
    <name evidence="4" type="synonym">mitch</name>
</gene>